<gene>
    <name evidence="9" type="ordered locus">At5g44410</name>
    <name evidence="10" type="ORF">MFC16.3</name>
</gene>
<feature type="signal peptide" evidence="3">
    <location>
        <begin position="1"/>
        <end position="22"/>
    </location>
</feature>
<feature type="chain" id="PRO_5008179930" description="Berberine bridge enzyme-like 27">
    <location>
        <begin position="23"/>
        <end position="535"/>
    </location>
</feature>
<feature type="domain" description="FAD-binding PCMH-type" evidence="5">
    <location>
        <begin position="78"/>
        <end position="253"/>
    </location>
</feature>
<feature type="modified residue" description="Pros-8alpha-FAD histidine" evidence="2">
    <location>
        <position position="115"/>
    </location>
</feature>
<feature type="glycosylation site" description="N-linked (GlcNAc...) asparagine" evidence="4">
    <location>
        <position position="18"/>
    </location>
</feature>
<feature type="glycosylation site" description="N-linked (GlcNAc...) asparagine" evidence="4">
    <location>
        <position position="66"/>
    </location>
</feature>
<feature type="glycosylation site" description="N-linked (GlcNAc...) asparagine" evidence="4">
    <location>
        <position position="146"/>
    </location>
</feature>
<feature type="glycosylation site" description="N-linked (GlcNAc...) asparagine" evidence="4">
    <location>
        <position position="215"/>
    </location>
</feature>
<feature type="glycosylation site" description="N-linked (GlcNAc...) asparagine" evidence="4">
    <location>
        <position position="439"/>
    </location>
</feature>
<feature type="disulfide bond" evidence="1">
    <location>
        <begin position="40"/>
        <end position="100"/>
    </location>
</feature>
<organism>
    <name type="scientific">Arabidopsis thaliana</name>
    <name type="common">Mouse-ear cress</name>
    <dbReference type="NCBI Taxonomy" id="3702"/>
    <lineage>
        <taxon>Eukaryota</taxon>
        <taxon>Viridiplantae</taxon>
        <taxon>Streptophyta</taxon>
        <taxon>Embryophyta</taxon>
        <taxon>Tracheophyta</taxon>
        <taxon>Spermatophyta</taxon>
        <taxon>Magnoliopsida</taxon>
        <taxon>eudicotyledons</taxon>
        <taxon>Gunneridae</taxon>
        <taxon>Pentapetalae</taxon>
        <taxon>rosids</taxon>
        <taxon>malvids</taxon>
        <taxon>Brassicales</taxon>
        <taxon>Brassicaceae</taxon>
        <taxon>Camelineae</taxon>
        <taxon>Arabidopsis</taxon>
    </lineage>
</organism>
<protein>
    <recommendedName>
        <fullName evidence="7">Berberine bridge enzyme-like 27</fullName>
        <shortName evidence="7">AtBBE-like 27</shortName>
        <ecNumber evidence="1">1.1.1.-</ecNumber>
    </recommendedName>
</protein>
<sequence length="535" mass="61274">MEILRFLLSLFIYFLLLNLSLSHFPSISAQRTNHENFLKCLSHRINEDDSRIIHTSKDPSYFSILNSSIQNPRFFVLETPKPVSIITPVQATDVQSTIKCARLHGIHIRTRSGGHDYEGLSYMAKSRPFVVIDLRNLRSITLDVDNRTGWVQSGATIGELYYEIGKLSKSLAFPAGLYPTVGIGGQFGGGGYGTLMRKYGLSADNVIDAHIVDANGSFLDRQGMGEDFFWAIRGGGGSSFSVVLSWKIRLLDVPSVVTVFKVVKTSEKEAVSIINKWQYIADKVPNDLFIRAMLQKETEVYASFPGLYLGPVSDLLALMKDKFPELGLEIGNCREMSWIESVLWFIKGESMEILAKRKRTSRSFKGKDDFIEEPIPKTAIQYLWRRFEAPEARLAKIILTPFGGKMSEIADNEIPFPHREGNLYEIQYLAYWSEEEDKNKTNTEKYLRWVESVYEFMTPYVSKSPRRAYVNFRDIDLGMYLGLNMKTKYEEAKVWGVKYFKNNFDRLVRVKTNVDPMDFFCDEQSIPIMKYVNDI</sequence>
<comment type="cofactor">
    <cofactor evidence="1">
        <name>FAD</name>
        <dbReference type="ChEBI" id="CHEBI:57692"/>
    </cofactor>
</comment>
<comment type="subcellular location">
    <subcellularLocation>
        <location evidence="6">Secreted</location>
        <location evidence="6">Cell wall</location>
    </subcellularLocation>
</comment>
<comment type="tissue specificity">
    <text evidence="6">Accumulates in cell walls of etiolated hypocotyls.</text>
</comment>
<comment type="similarity">
    <text evidence="8">Belongs to the oxygen-dependent FAD-linked oxidoreductase family.</text>
</comment>
<evidence type="ECO:0000250" key="1">
    <source>
        <dbReference type="UniProtKB" id="O64743"/>
    </source>
</evidence>
<evidence type="ECO:0000250" key="2">
    <source>
        <dbReference type="UniProtKB" id="Q9FI21"/>
    </source>
</evidence>
<evidence type="ECO:0000255" key="3"/>
<evidence type="ECO:0000255" key="4">
    <source>
        <dbReference type="PROSITE-ProRule" id="PRU00498"/>
    </source>
</evidence>
<evidence type="ECO:0000255" key="5">
    <source>
        <dbReference type="PROSITE-ProRule" id="PRU00718"/>
    </source>
</evidence>
<evidence type="ECO:0000269" key="6">
    <source>
    </source>
</evidence>
<evidence type="ECO:0000303" key="7">
    <source>
    </source>
</evidence>
<evidence type="ECO:0000305" key="8"/>
<evidence type="ECO:0000312" key="9">
    <source>
        <dbReference type="Araport" id="AT5G44410"/>
    </source>
</evidence>
<evidence type="ECO:0000312" key="10">
    <source>
        <dbReference type="EMBL" id="BAB09147.1"/>
    </source>
</evidence>
<proteinExistence type="evidence at transcript level"/>
<accession>Q9FI25</accession>
<accession>Q0WTH3</accession>
<keyword id="KW-0134">Cell wall</keyword>
<keyword id="KW-1015">Disulfide bond</keyword>
<keyword id="KW-0274">FAD</keyword>
<keyword id="KW-0285">Flavoprotein</keyword>
<keyword id="KW-0325">Glycoprotein</keyword>
<keyword id="KW-0547">Nucleotide-binding</keyword>
<keyword id="KW-0560">Oxidoreductase</keyword>
<keyword id="KW-1185">Reference proteome</keyword>
<keyword id="KW-0964">Secreted</keyword>
<keyword id="KW-0732">Signal</keyword>
<dbReference type="EC" id="1.1.1.-" evidence="1"/>
<dbReference type="EMBL" id="AB017065">
    <property type="protein sequence ID" value="BAB09147.1"/>
    <property type="molecule type" value="Genomic_DNA"/>
</dbReference>
<dbReference type="EMBL" id="CP002688">
    <property type="protein sequence ID" value="AED95106.1"/>
    <property type="molecule type" value="Genomic_DNA"/>
</dbReference>
<dbReference type="EMBL" id="AK227582">
    <property type="protein sequence ID" value="BAE99575.1"/>
    <property type="molecule type" value="mRNA"/>
</dbReference>
<dbReference type="RefSeq" id="NP_199254.1">
    <property type="nucleotide sequence ID" value="NM_123808.4"/>
</dbReference>
<dbReference type="SMR" id="Q9FI25"/>
<dbReference type="FunCoup" id="Q9FI25">
    <property type="interactions" value="5"/>
</dbReference>
<dbReference type="STRING" id="3702.Q9FI25"/>
<dbReference type="GlyGen" id="Q9FI25">
    <property type="glycosylation" value="6 sites"/>
</dbReference>
<dbReference type="iPTMnet" id="Q9FI25"/>
<dbReference type="PaxDb" id="3702-AT5G44410.1"/>
<dbReference type="ProteomicsDB" id="240639"/>
<dbReference type="EnsemblPlants" id="AT5G44410.1">
    <property type="protein sequence ID" value="AT5G44410.1"/>
    <property type="gene ID" value="AT5G44410"/>
</dbReference>
<dbReference type="GeneID" id="834467"/>
<dbReference type="Gramene" id="AT5G44410.1">
    <property type="protein sequence ID" value="AT5G44410.1"/>
    <property type="gene ID" value="AT5G44410"/>
</dbReference>
<dbReference type="KEGG" id="ath:AT5G44410"/>
<dbReference type="Araport" id="AT5G44410"/>
<dbReference type="TAIR" id="AT5G44410">
    <property type="gene designation" value="ATBBE27"/>
</dbReference>
<dbReference type="eggNOG" id="ENOG502QVGN">
    <property type="taxonomic scope" value="Eukaryota"/>
</dbReference>
<dbReference type="HOGENOM" id="CLU_018354_6_0_1"/>
<dbReference type="InParanoid" id="Q9FI25"/>
<dbReference type="OMA" id="NLVINMA"/>
<dbReference type="PhylomeDB" id="Q9FI25"/>
<dbReference type="BioCyc" id="ARA:AT5G44410-MONOMER"/>
<dbReference type="PRO" id="PR:Q9FI25"/>
<dbReference type="Proteomes" id="UP000006548">
    <property type="component" value="Chromosome 5"/>
</dbReference>
<dbReference type="ExpressionAtlas" id="Q9FI25">
    <property type="expression patterns" value="baseline and differential"/>
</dbReference>
<dbReference type="GO" id="GO:0005576">
    <property type="term" value="C:extracellular region"/>
    <property type="evidence" value="ECO:0007669"/>
    <property type="project" value="UniProtKB-KW"/>
</dbReference>
<dbReference type="GO" id="GO:0009505">
    <property type="term" value="C:plant-type cell wall"/>
    <property type="evidence" value="ECO:0000314"/>
    <property type="project" value="UniProtKB"/>
</dbReference>
<dbReference type="GO" id="GO:0071949">
    <property type="term" value="F:FAD binding"/>
    <property type="evidence" value="ECO:0007669"/>
    <property type="project" value="InterPro"/>
</dbReference>
<dbReference type="GO" id="GO:0016491">
    <property type="term" value="F:oxidoreductase activity"/>
    <property type="evidence" value="ECO:0007669"/>
    <property type="project" value="UniProtKB-KW"/>
</dbReference>
<dbReference type="FunFam" id="3.30.43.10:FF:000004">
    <property type="entry name" value="Berberine bridge enzyme-like 15"/>
    <property type="match status" value="1"/>
</dbReference>
<dbReference type="Gene3D" id="3.30.465.10">
    <property type="match status" value="1"/>
</dbReference>
<dbReference type="Gene3D" id="3.40.462.20">
    <property type="match status" value="1"/>
</dbReference>
<dbReference type="Gene3D" id="3.30.43.10">
    <property type="entry name" value="Uridine Diphospho-n-acetylenolpyruvylglucosamine Reductase, domain 2"/>
    <property type="match status" value="1"/>
</dbReference>
<dbReference type="InterPro" id="IPR012951">
    <property type="entry name" value="BBE"/>
</dbReference>
<dbReference type="InterPro" id="IPR016166">
    <property type="entry name" value="FAD-bd_PCMH"/>
</dbReference>
<dbReference type="InterPro" id="IPR036318">
    <property type="entry name" value="FAD-bd_PCMH-like_sf"/>
</dbReference>
<dbReference type="InterPro" id="IPR016167">
    <property type="entry name" value="FAD-bd_PCMH_sub1"/>
</dbReference>
<dbReference type="InterPro" id="IPR016169">
    <property type="entry name" value="FAD-bd_PCMH_sub2"/>
</dbReference>
<dbReference type="InterPro" id="IPR006094">
    <property type="entry name" value="Oxid_FAD_bind_N"/>
</dbReference>
<dbReference type="InterPro" id="IPR006093">
    <property type="entry name" value="Oxy_OxRdtase_FAD_BS"/>
</dbReference>
<dbReference type="PANTHER" id="PTHR32448">
    <property type="entry name" value="OS08G0158400 PROTEIN"/>
    <property type="match status" value="1"/>
</dbReference>
<dbReference type="Pfam" id="PF08031">
    <property type="entry name" value="BBE"/>
    <property type="match status" value="1"/>
</dbReference>
<dbReference type="Pfam" id="PF01565">
    <property type="entry name" value="FAD_binding_4"/>
    <property type="match status" value="1"/>
</dbReference>
<dbReference type="SUPFAM" id="SSF56176">
    <property type="entry name" value="FAD-binding/transporter-associated domain-like"/>
    <property type="match status" value="1"/>
</dbReference>
<dbReference type="PROSITE" id="PS51387">
    <property type="entry name" value="FAD_PCMH"/>
    <property type="match status" value="1"/>
</dbReference>
<dbReference type="PROSITE" id="PS00862">
    <property type="entry name" value="OX2_COVAL_FAD"/>
    <property type="match status" value="1"/>
</dbReference>
<reference key="1">
    <citation type="journal article" date="1999" name="DNA Res.">
        <title>Structural analysis of Arabidopsis thaliana chromosome 5. IX. Sequence features of the regions of 1,011,550 bp covered by seventeen P1 and TAC clones.</title>
        <authorList>
            <person name="Kaneko T."/>
            <person name="Katoh T."/>
            <person name="Sato S."/>
            <person name="Nakamura Y."/>
            <person name="Asamizu E."/>
            <person name="Kotani H."/>
            <person name="Miyajima N."/>
            <person name="Tabata S."/>
        </authorList>
    </citation>
    <scope>NUCLEOTIDE SEQUENCE [LARGE SCALE GENOMIC DNA]</scope>
    <source>
        <strain>cv. Columbia</strain>
    </source>
</reference>
<reference key="2">
    <citation type="journal article" date="2017" name="Plant J.">
        <title>Araport11: a complete reannotation of the Arabidopsis thaliana reference genome.</title>
        <authorList>
            <person name="Cheng C.Y."/>
            <person name="Krishnakumar V."/>
            <person name="Chan A.P."/>
            <person name="Thibaud-Nissen F."/>
            <person name="Schobel S."/>
            <person name="Town C.D."/>
        </authorList>
    </citation>
    <scope>GENOME REANNOTATION</scope>
    <source>
        <strain>cv. Columbia</strain>
    </source>
</reference>
<reference key="3">
    <citation type="submission" date="2006-07" db="EMBL/GenBank/DDBJ databases">
        <title>Large-scale analysis of RIKEN Arabidopsis full-length (RAFL) cDNAs.</title>
        <authorList>
            <person name="Totoki Y."/>
            <person name="Seki M."/>
            <person name="Ishida J."/>
            <person name="Nakajima M."/>
            <person name="Enju A."/>
            <person name="Kamiya A."/>
            <person name="Narusaka M."/>
            <person name="Shin-i T."/>
            <person name="Nakagawa M."/>
            <person name="Sakamoto N."/>
            <person name="Oishi K."/>
            <person name="Kohara Y."/>
            <person name="Kobayashi M."/>
            <person name="Toyoda A."/>
            <person name="Sakaki Y."/>
            <person name="Sakurai T."/>
            <person name="Iida K."/>
            <person name="Akiyama K."/>
            <person name="Satou M."/>
            <person name="Toyoda T."/>
            <person name="Konagaya A."/>
            <person name="Carninci P."/>
            <person name="Kawai J."/>
            <person name="Hayashizaki Y."/>
            <person name="Shinozaki K."/>
        </authorList>
    </citation>
    <scope>NUCLEOTIDE SEQUENCE [LARGE SCALE MRNA] OF 23-535</scope>
    <source>
        <strain>cv. Columbia</strain>
    </source>
</reference>
<reference key="4">
    <citation type="journal article" date="2008" name="BMC Plant Biol.">
        <title>A new picture of cell wall protein dynamics in elongating cells of Arabidopsis thaliana: confirmed actors and newcomers.</title>
        <authorList>
            <person name="Irshad M."/>
            <person name="Canut H."/>
            <person name="Borderies G."/>
            <person name="Pont-Lezica R."/>
            <person name="Jamet E."/>
        </authorList>
    </citation>
    <scope>SUBCELLULAR LOCATION</scope>
    <scope>TISSUE SPECIFICITY</scope>
</reference>
<reference key="5">
    <citation type="journal article" date="2015" name="J. Biol. Chem.">
        <title>Oxidation of monolignols by members of the berberine bridge enzyme family suggests a role in plant cell wall metabolism.</title>
        <authorList>
            <person name="Daniel B."/>
            <person name="Pavkov-Keller T."/>
            <person name="Steiner B."/>
            <person name="Dordic A."/>
            <person name="Gutmann A."/>
            <person name="Nidetzky B."/>
            <person name="Sensen C.W."/>
            <person name="van der Graaff E."/>
            <person name="Wallner S."/>
            <person name="Gruber K."/>
            <person name="Macheroux P."/>
        </authorList>
    </citation>
    <scope>GENE FAMILY</scope>
    <scope>NOMENCLATURE</scope>
</reference>
<name>BBE27_ARATH</name>